<organism>
    <name type="scientific">Shewanella woodyi (strain ATCC 51908 / MS32)</name>
    <dbReference type="NCBI Taxonomy" id="392500"/>
    <lineage>
        <taxon>Bacteria</taxon>
        <taxon>Pseudomonadati</taxon>
        <taxon>Pseudomonadota</taxon>
        <taxon>Gammaproteobacteria</taxon>
        <taxon>Alteromonadales</taxon>
        <taxon>Shewanellaceae</taxon>
        <taxon>Shewanella</taxon>
    </lineage>
</organism>
<feature type="chain" id="PRO_1000203577" description="Phosphoserine aminotransferase">
    <location>
        <begin position="1"/>
        <end position="364"/>
    </location>
</feature>
<feature type="binding site" evidence="1">
    <location>
        <position position="42"/>
    </location>
    <ligand>
        <name>L-glutamate</name>
        <dbReference type="ChEBI" id="CHEBI:29985"/>
    </ligand>
</feature>
<feature type="binding site" evidence="1">
    <location>
        <begin position="76"/>
        <end position="77"/>
    </location>
    <ligand>
        <name>pyridoxal 5'-phosphate</name>
        <dbReference type="ChEBI" id="CHEBI:597326"/>
    </ligand>
</feature>
<feature type="binding site" evidence="1">
    <location>
        <position position="102"/>
    </location>
    <ligand>
        <name>pyridoxal 5'-phosphate</name>
        <dbReference type="ChEBI" id="CHEBI:597326"/>
    </ligand>
</feature>
<feature type="binding site" evidence="1">
    <location>
        <position position="156"/>
    </location>
    <ligand>
        <name>pyridoxal 5'-phosphate</name>
        <dbReference type="ChEBI" id="CHEBI:597326"/>
    </ligand>
</feature>
<feature type="binding site" evidence="1">
    <location>
        <position position="175"/>
    </location>
    <ligand>
        <name>pyridoxal 5'-phosphate</name>
        <dbReference type="ChEBI" id="CHEBI:597326"/>
    </ligand>
</feature>
<feature type="binding site" evidence="1">
    <location>
        <position position="198"/>
    </location>
    <ligand>
        <name>pyridoxal 5'-phosphate</name>
        <dbReference type="ChEBI" id="CHEBI:597326"/>
    </ligand>
</feature>
<feature type="binding site" evidence="1">
    <location>
        <begin position="240"/>
        <end position="241"/>
    </location>
    <ligand>
        <name>pyridoxal 5'-phosphate</name>
        <dbReference type="ChEBI" id="CHEBI:597326"/>
    </ligand>
</feature>
<feature type="modified residue" description="N6-(pyridoxal phosphate)lysine" evidence="1">
    <location>
        <position position="199"/>
    </location>
</feature>
<dbReference type="EC" id="2.6.1.52" evidence="1"/>
<dbReference type="EMBL" id="CP000961">
    <property type="protein sequence ID" value="ACA86586.1"/>
    <property type="molecule type" value="Genomic_DNA"/>
</dbReference>
<dbReference type="RefSeq" id="WP_012324928.1">
    <property type="nucleotide sequence ID" value="NC_010506.1"/>
</dbReference>
<dbReference type="SMR" id="B1KF45"/>
<dbReference type="STRING" id="392500.Swoo_2307"/>
<dbReference type="KEGG" id="swd:Swoo_2307"/>
<dbReference type="eggNOG" id="COG1932">
    <property type="taxonomic scope" value="Bacteria"/>
</dbReference>
<dbReference type="HOGENOM" id="CLU_034866_0_2_6"/>
<dbReference type="UniPathway" id="UPA00135">
    <property type="reaction ID" value="UER00197"/>
</dbReference>
<dbReference type="UniPathway" id="UPA00244">
    <property type="reaction ID" value="UER00311"/>
</dbReference>
<dbReference type="Proteomes" id="UP000002168">
    <property type="component" value="Chromosome"/>
</dbReference>
<dbReference type="GO" id="GO:0005737">
    <property type="term" value="C:cytoplasm"/>
    <property type="evidence" value="ECO:0007669"/>
    <property type="project" value="UniProtKB-SubCell"/>
</dbReference>
<dbReference type="GO" id="GO:0004648">
    <property type="term" value="F:O-phospho-L-serine:2-oxoglutarate aminotransferase activity"/>
    <property type="evidence" value="ECO:0007669"/>
    <property type="project" value="UniProtKB-UniRule"/>
</dbReference>
<dbReference type="GO" id="GO:0030170">
    <property type="term" value="F:pyridoxal phosphate binding"/>
    <property type="evidence" value="ECO:0007669"/>
    <property type="project" value="UniProtKB-UniRule"/>
</dbReference>
<dbReference type="GO" id="GO:0006564">
    <property type="term" value="P:L-serine biosynthetic process"/>
    <property type="evidence" value="ECO:0007669"/>
    <property type="project" value="UniProtKB-UniRule"/>
</dbReference>
<dbReference type="GO" id="GO:0008615">
    <property type="term" value="P:pyridoxine biosynthetic process"/>
    <property type="evidence" value="ECO:0007669"/>
    <property type="project" value="UniProtKB-UniRule"/>
</dbReference>
<dbReference type="FunFam" id="3.40.640.10:FF:000010">
    <property type="entry name" value="Phosphoserine aminotransferase"/>
    <property type="match status" value="1"/>
</dbReference>
<dbReference type="FunFam" id="3.90.1150.10:FF:000006">
    <property type="entry name" value="Phosphoserine aminotransferase"/>
    <property type="match status" value="1"/>
</dbReference>
<dbReference type="Gene3D" id="3.90.1150.10">
    <property type="entry name" value="Aspartate Aminotransferase, domain 1"/>
    <property type="match status" value="1"/>
</dbReference>
<dbReference type="Gene3D" id="3.40.640.10">
    <property type="entry name" value="Type I PLP-dependent aspartate aminotransferase-like (Major domain)"/>
    <property type="match status" value="1"/>
</dbReference>
<dbReference type="HAMAP" id="MF_00160">
    <property type="entry name" value="SerC_aminotrans_5"/>
    <property type="match status" value="1"/>
</dbReference>
<dbReference type="InterPro" id="IPR000192">
    <property type="entry name" value="Aminotrans_V_dom"/>
</dbReference>
<dbReference type="InterPro" id="IPR020578">
    <property type="entry name" value="Aminotrans_V_PyrdxlP_BS"/>
</dbReference>
<dbReference type="InterPro" id="IPR022278">
    <property type="entry name" value="Pser_aminoTfrase"/>
</dbReference>
<dbReference type="InterPro" id="IPR015424">
    <property type="entry name" value="PyrdxlP-dep_Trfase"/>
</dbReference>
<dbReference type="InterPro" id="IPR015421">
    <property type="entry name" value="PyrdxlP-dep_Trfase_major"/>
</dbReference>
<dbReference type="InterPro" id="IPR015422">
    <property type="entry name" value="PyrdxlP-dep_Trfase_small"/>
</dbReference>
<dbReference type="NCBIfam" id="NF003764">
    <property type="entry name" value="PRK05355.1"/>
    <property type="match status" value="1"/>
</dbReference>
<dbReference type="NCBIfam" id="TIGR01364">
    <property type="entry name" value="serC_1"/>
    <property type="match status" value="1"/>
</dbReference>
<dbReference type="PANTHER" id="PTHR43247">
    <property type="entry name" value="PHOSPHOSERINE AMINOTRANSFERASE"/>
    <property type="match status" value="1"/>
</dbReference>
<dbReference type="PANTHER" id="PTHR43247:SF1">
    <property type="entry name" value="PHOSPHOSERINE AMINOTRANSFERASE"/>
    <property type="match status" value="1"/>
</dbReference>
<dbReference type="Pfam" id="PF00266">
    <property type="entry name" value="Aminotran_5"/>
    <property type="match status" value="1"/>
</dbReference>
<dbReference type="PIRSF" id="PIRSF000525">
    <property type="entry name" value="SerC"/>
    <property type="match status" value="1"/>
</dbReference>
<dbReference type="SUPFAM" id="SSF53383">
    <property type="entry name" value="PLP-dependent transferases"/>
    <property type="match status" value="1"/>
</dbReference>
<dbReference type="PROSITE" id="PS00595">
    <property type="entry name" value="AA_TRANSFER_CLASS_5"/>
    <property type="match status" value="1"/>
</dbReference>
<evidence type="ECO:0000255" key="1">
    <source>
        <dbReference type="HAMAP-Rule" id="MF_00160"/>
    </source>
</evidence>
<gene>
    <name evidence="1" type="primary">serC</name>
    <name type="ordered locus">Swoo_2307</name>
</gene>
<accession>B1KF45</accession>
<keyword id="KW-0028">Amino-acid biosynthesis</keyword>
<keyword id="KW-0032">Aminotransferase</keyword>
<keyword id="KW-0963">Cytoplasm</keyword>
<keyword id="KW-0663">Pyridoxal phosphate</keyword>
<keyword id="KW-0664">Pyridoxine biosynthesis</keyword>
<keyword id="KW-1185">Reference proteome</keyword>
<keyword id="KW-0718">Serine biosynthesis</keyword>
<keyword id="KW-0808">Transferase</keyword>
<protein>
    <recommendedName>
        <fullName evidence="1">Phosphoserine aminotransferase</fullName>
        <ecNumber evidence="1">2.6.1.52</ecNumber>
    </recommendedName>
    <alternativeName>
        <fullName evidence="1">Phosphohydroxythreonine aminotransferase</fullName>
        <shortName evidence="1">PSAT</shortName>
    </alternativeName>
</protein>
<proteinExistence type="inferred from homology"/>
<reference key="1">
    <citation type="submission" date="2008-02" db="EMBL/GenBank/DDBJ databases">
        <title>Complete sequence of Shewanella woodyi ATCC 51908.</title>
        <authorList>
            <consortium name="US DOE Joint Genome Institute"/>
            <person name="Copeland A."/>
            <person name="Lucas S."/>
            <person name="Lapidus A."/>
            <person name="Glavina del Rio T."/>
            <person name="Dalin E."/>
            <person name="Tice H."/>
            <person name="Bruce D."/>
            <person name="Goodwin L."/>
            <person name="Pitluck S."/>
            <person name="Sims D."/>
            <person name="Brettin T."/>
            <person name="Detter J.C."/>
            <person name="Han C."/>
            <person name="Kuske C.R."/>
            <person name="Schmutz J."/>
            <person name="Larimer F."/>
            <person name="Land M."/>
            <person name="Hauser L."/>
            <person name="Kyrpides N."/>
            <person name="Lykidis A."/>
            <person name="Zhao J.-S."/>
            <person name="Richardson P."/>
        </authorList>
    </citation>
    <scope>NUCLEOTIDE SEQUENCE [LARGE SCALE GENOMIC DNA]</scope>
    <source>
        <strain>ATCC 51908 / MS32</strain>
    </source>
</reference>
<name>SERC_SHEWM</name>
<sequence length="364" mass="40387">MSATYNFCAGPAMLPQAVMEKAQSELLDWNGLGTSVMEISHRSKEFIALTEQAEIDLRELMSIPSNYHVLFMHGGGRGQFSAVVNNFLGNNGKALYLVDGSWSSAAVDEAKKLAGETQIDTLNIVEKDGATSRVSIPNLKELDQDYRYLHYCPNETVDGIEIFEELDSPWPIVADMSSNIMSREIDVSRYGLIYAGAQKNIGPSGLSIVIVKDELLQLPQLPQSSIMDYRLGVKHGSMYNTPPTFAWYLAAEVFKWLKSSGGVGEVQKANERKAGTLYQFIDSCDFYENRVAVENRSVMNVTFYLKDEALNDEFIKQAKAVGLVALKGHRSVGGMRASIYNAMPLEGVEKLVEFMTDFANKNRA</sequence>
<comment type="function">
    <text evidence="1">Catalyzes the reversible conversion of 3-phosphohydroxypyruvate to phosphoserine and of 3-hydroxy-2-oxo-4-phosphonooxybutanoate to phosphohydroxythreonine.</text>
</comment>
<comment type="catalytic activity">
    <reaction evidence="1">
        <text>O-phospho-L-serine + 2-oxoglutarate = 3-phosphooxypyruvate + L-glutamate</text>
        <dbReference type="Rhea" id="RHEA:14329"/>
        <dbReference type="ChEBI" id="CHEBI:16810"/>
        <dbReference type="ChEBI" id="CHEBI:18110"/>
        <dbReference type="ChEBI" id="CHEBI:29985"/>
        <dbReference type="ChEBI" id="CHEBI:57524"/>
        <dbReference type="EC" id="2.6.1.52"/>
    </reaction>
</comment>
<comment type="catalytic activity">
    <reaction evidence="1">
        <text>4-(phosphooxy)-L-threonine + 2-oxoglutarate = (R)-3-hydroxy-2-oxo-4-phosphooxybutanoate + L-glutamate</text>
        <dbReference type="Rhea" id="RHEA:16573"/>
        <dbReference type="ChEBI" id="CHEBI:16810"/>
        <dbReference type="ChEBI" id="CHEBI:29985"/>
        <dbReference type="ChEBI" id="CHEBI:58452"/>
        <dbReference type="ChEBI" id="CHEBI:58538"/>
        <dbReference type="EC" id="2.6.1.52"/>
    </reaction>
</comment>
<comment type="cofactor">
    <cofactor evidence="1">
        <name>pyridoxal 5'-phosphate</name>
        <dbReference type="ChEBI" id="CHEBI:597326"/>
    </cofactor>
    <text evidence="1">Binds 1 pyridoxal phosphate per subunit.</text>
</comment>
<comment type="pathway">
    <text evidence="1">Amino-acid biosynthesis; L-serine biosynthesis; L-serine from 3-phospho-D-glycerate: step 2/3.</text>
</comment>
<comment type="pathway">
    <text evidence="1">Cofactor biosynthesis; pyridoxine 5'-phosphate biosynthesis; pyridoxine 5'-phosphate from D-erythrose 4-phosphate: step 3/5.</text>
</comment>
<comment type="subunit">
    <text evidence="1">Homodimer.</text>
</comment>
<comment type="subcellular location">
    <subcellularLocation>
        <location evidence="1">Cytoplasm</location>
    </subcellularLocation>
</comment>
<comment type="similarity">
    <text evidence="1">Belongs to the class-V pyridoxal-phosphate-dependent aminotransferase family. SerC subfamily.</text>
</comment>